<gene>
    <name type="ORF">SALLA</name>
</gene>
<feature type="chain" id="PRO_0000099654" description="Uncharacterized 9.9 kDa protein">
    <location>
        <begin position="1"/>
        <end position="88"/>
    </location>
</feature>
<reference key="1">
    <citation type="journal article" date="1991" name="J. Gen. Virol.">
        <title>Nucleotide sequence of 42 kbp of vaccinia virus strain WR from near the right inverted terminal repeat.</title>
        <authorList>
            <person name="Smith G.L."/>
            <person name="Chan Y.S."/>
            <person name="Howard S.T."/>
        </authorList>
    </citation>
    <scope>NUCLEOTIDE SEQUENCE [GENOMIC DNA]</scope>
</reference>
<name>YVAL_VACCW</name>
<keyword id="KW-1185">Reference proteome</keyword>
<organism>
    <name type="scientific">Vaccinia virus (strain Western Reserve)</name>
    <name type="common">VACV</name>
    <name type="synonym">Vaccinia virus (strain WR)</name>
    <dbReference type="NCBI Taxonomy" id="10254"/>
    <lineage>
        <taxon>Viruses</taxon>
        <taxon>Varidnaviria</taxon>
        <taxon>Bamfordvirae</taxon>
        <taxon>Nucleocytoviricota</taxon>
        <taxon>Pokkesviricetes</taxon>
        <taxon>Chitovirales</taxon>
        <taxon>Poxviridae</taxon>
        <taxon>Chordopoxvirinae</taxon>
        <taxon>Orthopoxvirus</taxon>
        <taxon>Vaccinia virus</taxon>
    </lineage>
</organism>
<accession>P68625</accession>
<accession>P20521</accession>
<organismHost>
    <name type="scientific">Bos taurus</name>
    <name type="common">Bovine</name>
    <dbReference type="NCBI Taxonomy" id="9913"/>
</organismHost>
<sequence>MFNFCSMTSLSAVSVHIRNSPSQNTESSIIIANRLLDLAVCIIFNMFNISFRFPFTGIDRSIFSASEMEMLKLQKCVMLARPNIGTCL</sequence>
<protein>
    <recommendedName>
        <fullName>Uncharacterized 9.9 kDa protein</fullName>
    </recommendedName>
</protein>
<proteinExistence type="predicted"/>
<dbReference type="EMBL" id="AY243312">
    <property type="status" value="NOT_ANNOTATED_CDS"/>
    <property type="molecule type" value="Genomic_DNA"/>
</dbReference>
<dbReference type="PIR" id="H42524">
    <property type="entry name" value="H42524"/>
</dbReference>
<dbReference type="Proteomes" id="UP000000344">
    <property type="component" value="Genome"/>
</dbReference>